<dbReference type="EMBL" id="CR954246">
    <property type="protein sequence ID" value="CAI87857.1"/>
    <property type="molecule type" value="Genomic_DNA"/>
</dbReference>
<dbReference type="SMR" id="Q3IJL9"/>
<dbReference type="STRING" id="326442.PSHAa2820"/>
<dbReference type="KEGG" id="pha:PSHAa2820"/>
<dbReference type="eggNOG" id="COG0093">
    <property type="taxonomic scope" value="Bacteria"/>
</dbReference>
<dbReference type="HOGENOM" id="CLU_095071_2_1_6"/>
<dbReference type="BioCyc" id="PHAL326442:PSHA_RS13845-MONOMER"/>
<dbReference type="Proteomes" id="UP000006843">
    <property type="component" value="Chromosome I"/>
</dbReference>
<dbReference type="GO" id="GO:0022625">
    <property type="term" value="C:cytosolic large ribosomal subunit"/>
    <property type="evidence" value="ECO:0007669"/>
    <property type="project" value="TreeGrafter"/>
</dbReference>
<dbReference type="GO" id="GO:0070180">
    <property type="term" value="F:large ribosomal subunit rRNA binding"/>
    <property type="evidence" value="ECO:0007669"/>
    <property type="project" value="TreeGrafter"/>
</dbReference>
<dbReference type="GO" id="GO:0003735">
    <property type="term" value="F:structural constituent of ribosome"/>
    <property type="evidence" value="ECO:0007669"/>
    <property type="project" value="InterPro"/>
</dbReference>
<dbReference type="GO" id="GO:0006412">
    <property type="term" value="P:translation"/>
    <property type="evidence" value="ECO:0007669"/>
    <property type="project" value="UniProtKB-UniRule"/>
</dbReference>
<dbReference type="CDD" id="cd00337">
    <property type="entry name" value="Ribosomal_uL14"/>
    <property type="match status" value="1"/>
</dbReference>
<dbReference type="FunFam" id="2.40.150.20:FF:000001">
    <property type="entry name" value="50S ribosomal protein L14"/>
    <property type="match status" value="1"/>
</dbReference>
<dbReference type="Gene3D" id="2.40.150.20">
    <property type="entry name" value="Ribosomal protein L14"/>
    <property type="match status" value="1"/>
</dbReference>
<dbReference type="HAMAP" id="MF_01367">
    <property type="entry name" value="Ribosomal_uL14"/>
    <property type="match status" value="1"/>
</dbReference>
<dbReference type="InterPro" id="IPR000218">
    <property type="entry name" value="Ribosomal_uL14"/>
</dbReference>
<dbReference type="InterPro" id="IPR005745">
    <property type="entry name" value="Ribosomal_uL14_bac-type"/>
</dbReference>
<dbReference type="InterPro" id="IPR019972">
    <property type="entry name" value="Ribosomal_uL14_CS"/>
</dbReference>
<dbReference type="InterPro" id="IPR036853">
    <property type="entry name" value="Ribosomal_uL14_sf"/>
</dbReference>
<dbReference type="NCBIfam" id="TIGR01067">
    <property type="entry name" value="rplN_bact"/>
    <property type="match status" value="1"/>
</dbReference>
<dbReference type="PANTHER" id="PTHR11761">
    <property type="entry name" value="50S/60S RIBOSOMAL PROTEIN L14/L23"/>
    <property type="match status" value="1"/>
</dbReference>
<dbReference type="PANTHER" id="PTHR11761:SF3">
    <property type="entry name" value="LARGE RIBOSOMAL SUBUNIT PROTEIN UL14M"/>
    <property type="match status" value="1"/>
</dbReference>
<dbReference type="Pfam" id="PF00238">
    <property type="entry name" value="Ribosomal_L14"/>
    <property type="match status" value="1"/>
</dbReference>
<dbReference type="SMART" id="SM01374">
    <property type="entry name" value="Ribosomal_L14"/>
    <property type="match status" value="1"/>
</dbReference>
<dbReference type="SUPFAM" id="SSF50193">
    <property type="entry name" value="Ribosomal protein L14"/>
    <property type="match status" value="1"/>
</dbReference>
<dbReference type="PROSITE" id="PS00049">
    <property type="entry name" value="RIBOSOMAL_L14"/>
    <property type="match status" value="1"/>
</dbReference>
<protein>
    <recommendedName>
        <fullName evidence="1">Large ribosomal subunit protein uL14</fullName>
    </recommendedName>
    <alternativeName>
        <fullName evidence="2">50S ribosomal protein L14</fullName>
    </alternativeName>
</protein>
<organism>
    <name type="scientific">Pseudoalteromonas translucida (strain TAC 125)</name>
    <dbReference type="NCBI Taxonomy" id="326442"/>
    <lineage>
        <taxon>Bacteria</taxon>
        <taxon>Pseudomonadati</taxon>
        <taxon>Pseudomonadota</taxon>
        <taxon>Gammaproteobacteria</taxon>
        <taxon>Alteromonadales</taxon>
        <taxon>Pseudoalteromonadaceae</taxon>
        <taxon>Pseudoalteromonas</taxon>
    </lineage>
</organism>
<keyword id="KW-1185">Reference proteome</keyword>
<keyword id="KW-0687">Ribonucleoprotein</keyword>
<keyword id="KW-0689">Ribosomal protein</keyword>
<keyword id="KW-0694">RNA-binding</keyword>
<keyword id="KW-0699">rRNA-binding</keyword>
<feature type="chain" id="PRO_0000266524" description="Large ribosomal subunit protein uL14">
    <location>
        <begin position="1"/>
        <end position="122"/>
    </location>
</feature>
<name>RL14_PSET1</name>
<accession>Q3IJL9</accession>
<proteinExistence type="inferred from homology"/>
<reference key="1">
    <citation type="journal article" date="2005" name="Genome Res.">
        <title>Coping with cold: the genome of the versatile marine Antarctica bacterium Pseudoalteromonas haloplanktis TAC125.</title>
        <authorList>
            <person name="Medigue C."/>
            <person name="Krin E."/>
            <person name="Pascal G."/>
            <person name="Barbe V."/>
            <person name="Bernsel A."/>
            <person name="Bertin P.N."/>
            <person name="Cheung F."/>
            <person name="Cruveiller S."/>
            <person name="D'Amico S."/>
            <person name="Duilio A."/>
            <person name="Fang G."/>
            <person name="Feller G."/>
            <person name="Ho C."/>
            <person name="Mangenot S."/>
            <person name="Marino G."/>
            <person name="Nilsson J."/>
            <person name="Parrilli E."/>
            <person name="Rocha E.P.C."/>
            <person name="Rouy Z."/>
            <person name="Sekowska A."/>
            <person name="Tutino M.L."/>
            <person name="Vallenet D."/>
            <person name="von Heijne G."/>
            <person name="Danchin A."/>
        </authorList>
    </citation>
    <scope>NUCLEOTIDE SEQUENCE [LARGE SCALE GENOMIC DNA]</scope>
    <source>
        <strain>TAC 125</strain>
    </source>
</reference>
<evidence type="ECO:0000255" key="1">
    <source>
        <dbReference type="HAMAP-Rule" id="MF_01367"/>
    </source>
</evidence>
<evidence type="ECO:0000305" key="2"/>
<gene>
    <name evidence="1" type="primary">rplN</name>
    <name type="ordered locus">PSHAa2820</name>
</gene>
<comment type="function">
    <text evidence="1">Binds to 23S rRNA. Forms part of two intersubunit bridges in the 70S ribosome.</text>
</comment>
<comment type="subunit">
    <text evidence="1">Part of the 50S ribosomal subunit. Forms a cluster with proteins L3 and L19. In the 70S ribosome, L14 and L19 interact and together make contacts with the 16S rRNA in bridges B5 and B8.</text>
</comment>
<comment type="similarity">
    <text evidence="1">Belongs to the universal ribosomal protein uL14 family.</text>
</comment>
<sequence length="122" mass="13420">MIQMQTQLEVADNSGARKVQCIKVLGGSHRRYAAIGDIIKVSVKEAIPRGKVKKGDVKNAVVVRTKKGVRRPDGSLIRFDSNAAVILNDNLQPIGTRIFGPVTRELRNDKFMKIVSLAPEVL</sequence>